<comment type="subcellular location">
    <subcellularLocation>
        <location evidence="2">Membrane</location>
        <topology evidence="2">Single-pass membrane protein</topology>
    </subcellularLocation>
</comment>
<comment type="caution">
    <text evidence="3">Product of a dubious gene prediction unlikely to encode a functional protein. Because of that it is not part of the S.cerevisiae S288c complete/reference proteome set.</text>
</comment>
<sequence length="111" mass="13603">MVLLHPILAESCTRYFLLLPSYTHPNHLFHFPSISFFFFFFFFFFSFRRNCLFRIVKDEVKYSGVYYYIHTKQDKETFLDLTFYFNCFCIPYNKKDLLFNVGVIRPLLDLQ</sequence>
<feature type="chain" id="PRO_0000202805" description="Putative uncharacterized protein YGR069W">
    <location>
        <begin position="1"/>
        <end position="111"/>
    </location>
</feature>
<feature type="transmembrane region" description="Helical" evidence="1">
    <location>
        <begin position="27"/>
        <end position="47"/>
    </location>
</feature>
<keyword id="KW-0472">Membrane</keyword>
<keyword id="KW-0812">Transmembrane</keyword>
<keyword id="KW-1133">Transmembrane helix</keyword>
<organism>
    <name type="scientific">Saccharomyces cerevisiae (strain ATCC 204508 / S288c)</name>
    <name type="common">Baker's yeast</name>
    <dbReference type="NCBI Taxonomy" id="559292"/>
    <lineage>
        <taxon>Eukaryota</taxon>
        <taxon>Fungi</taxon>
        <taxon>Dikarya</taxon>
        <taxon>Ascomycota</taxon>
        <taxon>Saccharomycotina</taxon>
        <taxon>Saccharomycetes</taxon>
        <taxon>Saccharomycetales</taxon>
        <taxon>Saccharomycetaceae</taxon>
        <taxon>Saccharomyces</taxon>
    </lineage>
</organism>
<evidence type="ECO:0000255" key="1"/>
<evidence type="ECO:0000305" key="2"/>
<evidence type="ECO:0000305" key="3">
    <source>
    </source>
</evidence>
<name>YG2C_YEAST</name>
<proteinExistence type="uncertain"/>
<gene>
    <name type="ordered locus">YGR069W</name>
</gene>
<dbReference type="EMBL" id="Z72853">
    <property type="protein sequence ID" value="CAA97071.1"/>
    <property type="molecule type" value="Genomic_DNA"/>
</dbReference>
<dbReference type="PIR" id="S64364">
    <property type="entry name" value="S64364"/>
</dbReference>
<dbReference type="DIP" id="DIP-3796N"/>
<dbReference type="IntAct" id="P53245">
    <property type="interactions" value="1"/>
</dbReference>
<dbReference type="STRING" id="4932.YGR069W"/>
<dbReference type="PaxDb" id="4932-YGR069W"/>
<dbReference type="EnsemblFungi" id="YGR069W_mRNA">
    <property type="protein sequence ID" value="YGR069W"/>
    <property type="gene ID" value="YGR069W"/>
</dbReference>
<dbReference type="AGR" id="SGD:S000003301"/>
<dbReference type="SGD" id="S000003301">
    <property type="gene designation" value="YGR069W"/>
</dbReference>
<dbReference type="HOGENOM" id="CLU_2160388_0_0_1"/>
<dbReference type="GO" id="GO:0016020">
    <property type="term" value="C:membrane"/>
    <property type="evidence" value="ECO:0007669"/>
    <property type="project" value="UniProtKB-SubCell"/>
</dbReference>
<accession>P53245</accession>
<reference key="1">
    <citation type="journal article" date="1997" name="Nature">
        <title>The nucleotide sequence of Saccharomyces cerevisiae chromosome VII.</title>
        <authorList>
            <person name="Tettelin H."/>
            <person name="Agostoni-Carbone M.L."/>
            <person name="Albermann K."/>
            <person name="Albers M."/>
            <person name="Arroyo J."/>
            <person name="Backes U."/>
            <person name="Barreiros T."/>
            <person name="Bertani I."/>
            <person name="Bjourson A.J."/>
            <person name="Brueckner M."/>
            <person name="Bruschi C.V."/>
            <person name="Carignani G."/>
            <person name="Castagnoli L."/>
            <person name="Cerdan E."/>
            <person name="Clemente M.L."/>
            <person name="Coblenz A."/>
            <person name="Coglievina M."/>
            <person name="Coissac E."/>
            <person name="Defoor E."/>
            <person name="Del Bino S."/>
            <person name="Delius H."/>
            <person name="Delneri D."/>
            <person name="de Wergifosse P."/>
            <person name="Dujon B."/>
            <person name="Durand P."/>
            <person name="Entian K.-D."/>
            <person name="Eraso P."/>
            <person name="Escribano V."/>
            <person name="Fabiani L."/>
            <person name="Fartmann B."/>
            <person name="Feroli F."/>
            <person name="Feuermann M."/>
            <person name="Frontali L."/>
            <person name="Garcia-Gonzalez M."/>
            <person name="Garcia-Saez M.I."/>
            <person name="Goffeau A."/>
            <person name="Guerreiro P."/>
            <person name="Hani J."/>
            <person name="Hansen M."/>
            <person name="Hebling U."/>
            <person name="Hernandez K."/>
            <person name="Heumann K."/>
            <person name="Hilger F."/>
            <person name="Hofmann B."/>
            <person name="Indge K.J."/>
            <person name="James C.M."/>
            <person name="Klima R."/>
            <person name="Koetter P."/>
            <person name="Kramer B."/>
            <person name="Kramer W."/>
            <person name="Lauquin G."/>
            <person name="Leuther H."/>
            <person name="Louis E.J."/>
            <person name="Maillier E."/>
            <person name="Marconi A."/>
            <person name="Martegani E."/>
            <person name="Mazon M.J."/>
            <person name="Mazzoni C."/>
            <person name="McReynolds A.D.K."/>
            <person name="Melchioretto P."/>
            <person name="Mewes H.-W."/>
            <person name="Minenkova O."/>
            <person name="Mueller-Auer S."/>
            <person name="Nawrocki A."/>
            <person name="Netter P."/>
            <person name="Neu R."/>
            <person name="Nombela C."/>
            <person name="Oliver S.G."/>
            <person name="Panzeri L."/>
            <person name="Paoluzi S."/>
            <person name="Plevani P."/>
            <person name="Portetelle D."/>
            <person name="Portillo F."/>
            <person name="Potier S."/>
            <person name="Purnelle B."/>
            <person name="Rieger M."/>
            <person name="Riles L."/>
            <person name="Rinaldi T."/>
            <person name="Robben J."/>
            <person name="Rodrigues-Pousada C."/>
            <person name="Rodriguez-Belmonte E."/>
            <person name="Rodriguez-Torres A.M."/>
            <person name="Rose M."/>
            <person name="Ruzzi M."/>
            <person name="Saliola M."/>
            <person name="Sanchez-Perez M."/>
            <person name="Schaefer B."/>
            <person name="Schaefer M."/>
            <person name="Scharfe M."/>
            <person name="Schmidheini T."/>
            <person name="Schreer A."/>
            <person name="Skala J."/>
            <person name="Souciet J.-L."/>
            <person name="Steensma H.Y."/>
            <person name="Talla E."/>
            <person name="Thierry A."/>
            <person name="Vandenbol M."/>
            <person name="van der Aart Q.J.M."/>
            <person name="Van Dyck L."/>
            <person name="Vanoni M."/>
            <person name="Verhasselt P."/>
            <person name="Voet M."/>
            <person name="Volckaert G."/>
            <person name="Wambutt R."/>
            <person name="Watson M.D."/>
            <person name="Weber N."/>
            <person name="Wedler E."/>
            <person name="Wedler H."/>
            <person name="Wipfli P."/>
            <person name="Wolf K."/>
            <person name="Wright L.F."/>
            <person name="Zaccaria P."/>
            <person name="Zimmermann M."/>
            <person name="Zollner A."/>
            <person name="Kleine K."/>
        </authorList>
    </citation>
    <scope>NUCLEOTIDE SEQUENCE [LARGE SCALE GENOMIC DNA]</scope>
    <source>
        <strain>ATCC 204508 / S288c</strain>
    </source>
</reference>
<reference key="2">
    <citation type="journal article" date="2014" name="G3 (Bethesda)">
        <title>The reference genome sequence of Saccharomyces cerevisiae: Then and now.</title>
        <authorList>
            <person name="Engel S.R."/>
            <person name="Dietrich F.S."/>
            <person name="Fisk D.G."/>
            <person name="Binkley G."/>
            <person name="Balakrishnan R."/>
            <person name="Costanzo M.C."/>
            <person name="Dwight S.S."/>
            <person name="Hitz B.C."/>
            <person name="Karra K."/>
            <person name="Nash R.S."/>
            <person name="Weng S."/>
            <person name="Wong E.D."/>
            <person name="Lloyd P."/>
            <person name="Skrzypek M.S."/>
            <person name="Miyasato S.R."/>
            <person name="Simison M."/>
            <person name="Cherry J.M."/>
        </authorList>
    </citation>
    <scope>GENOME REANNOTATION</scope>
    <source>
        <strain>ATCC 204508 / S288c</strain>
    </source>
</reference>
<protein>
    <recommendedName>
        <fullName>Putative uncharacterized protein YGR069W</fullName>
    </recommendedName>
</protein>